<comment type="function">
    <text evidence="1">Key enzyme in the regulation of glycerol uptake and metabolism. Catalyzes the phosphorylation of glycerol to yield sn-glycerol 3-phosphate.</text>
</comment>
<comment type="catalytic activity">
    <reaction evidence="1">
        <text>glycerol + ATP = sn-glycerol 3-phosphate + ADP + H(+)</text>
        <dbReference type="Rhea" id="RHEA:21644"/>
        <dbReference type="ChEBI" id="CHEBI:15378"/>
        <dbReference type="ChEBI" id="CHEBI:17754"/>
        <dbReference type="ChEBI" id="CHEBI:30616"/>
        <dbReference type="ChEBI" id="CHEBI:57597"/>
        <dbReference type="ChEBI" id="CHEBI:456216"/>
        <dbReference type="EC" id="2.7.1.30"/>
    </reaction>
</comment>
<comment type="activity regulation">
    <text evidence="1">Activated by phosphorylation and inhibited by fructose 1,6-bisphosphate (FBP).</text>
</comment>
<comment type="pathway">
    <text evidence="1">Polyol metabolism; glycerol degradation via glycerol kinase pathway; sn-glycerol 3-phosphate from glycerol: step 1/1.</text>
</comment>
<comment type="subunit">
    <text evidence="1">Homotetramer and homodimer (in equilibrium).</text>
</comment>
<comment type="PTM">
    <text evidence="1">The phosphoenolpyruvate-dependent sugar phosphotransferase system (PTS), including enzyme I, and histidine-containing protein (HPr) are required for the phosphorylation, which leads to the activation of the enzyme.</text>
</comment>
<comment type="similarity">
    <text evidence="1">Belongs to the FGGY kinase family.</text>
</comment>
<accession>Q2FHD9</accession>
<dbReference type="EC" id="2.7.1.30" evidence="1"/>
<dbReference type="EMBL" id="CP000255">
    <property type="protein sequence ID" value="ABD20852.1"/>
    <property type="molecule type" value="Genomic_DNA"/>
</dbReference>
<dbReference type="RefSeq" id="WP_000417369.1">
    <property type="nucleotide sequence ID" value="NZ_CP027476.1"/>
</dbReference>
<dbReference type="SMR" id="Q2FHD9"/>
<dbReference type="KEGG" id="saa:SAUSA300_1192"/>
<dbReference type="HOGENOM" id="CLU_009281_2_3_9"/>
<dbReference type="OMA" id="HKTDATN"/>
<dbReference type="UniPathway" id="UPA00618">
    <property type="reaction ID" value="UER00672"/>
</dbReference>
<dbReference type="Proteomes" id="UP000001939">
    <property type="component" value="Chromosome"/>
</dbReference>
<dbReference type="GO" id="GO:0005829">
    <property type="term" value="C:cytosol"/>
    <property type="evidence" value="ECO:0007669"/>
    <property type="project" value="TreeGrafter"/>
</dbReference>
<dbReference type="GO" id="GO:0005524">
    <property type="term" value="F:ATP binding"/>
    <property type="evidence" value="ECO:0007669"/>
    <property type="project" value="UniProtKB-UniRule"/>
</dbReference>
<dbReference type="GO" id="GO:0004370">
    <property type="term" value="F:glycerol kinase activity"/>
    <property type="evidence" value="ECO:0000250"/>
    <property type="project" value="UniProtKB"/>
</dbReference>
<dbReference type="GO" id="GO:0019563">
    <property type="term" value="P:glycerol catabolic process"/>
    <property type="evidence" value="ECO:0007669"/>
    <property type="project" value="UniProtKB-UniRule"/>
</dbReference>
<dbReference type="GO" id="GO:0006071">
    <property type="term" value="P:glycerol metabolic process"/>
    <property type="evidence" value="ECO:0000250"/>
    <property type="project" value="UniProtKB"/>
</dbReference>
<dbReference type="GO" id="GO:0006072">
    <property type="term" value="P:glycerol-3-phosphate metabolic process"/>
    <property type="evidence" value="ECO:0007669"/>
    <property type="project" value="InterPro"/>
</dbReference>
<dbReference type="CDD" id="cd07786">
    <property type="entry name" value="FGGY_EcGK_like"/>
    <property type="match status" value="1"/>
</dbReference>
<dbReference type="FunFam" id="3.30.420.40:FF:000007">
    <property type="entry name" value="Glycerol kinase"/>
    <property type="match status" value="1"/>
</dbReference>
<dbReference type="FunFam" id="3.30.420.40:FF:000008">
    <property type="entry name" value="Glycerol kinase"/>
    <property type="match status" value="1"/>
</dbReference>
<dbReference type="Gene3D" id="3.30.420.40">
    <property type="match status" value="2"/>
</dbReference>
<dbReference type="HAMAP" id="MF_00186">
    <property type="entry name" value="Glycerol_kin"/>
    <property type="match status" value="1"/>
</dbReference>
<dbReference type="InterPro" id="IPR043129">
    <property type="entry name" value="ATPase_NBD"/>
</dbReference>
<dbReference type="InterPro" id="IPR000577">
    <property type="entry name" value="Carb_kinase_FGGY"/>
</dbReference>
<dbReference type="InterPro" id="IPR018483">
    <property type="entry name" value="Carb_kinase_FGGY_CS"/>
</dbReference>
<dbReference type="InterPro" id="IPR018485">
    <property type="entry name" value="FGGY_C"/>
</dbReference>
<dbReference type="InterPro" id="IPR018484">
    <property type="entry name" value="FGGY_N"/>
</dbReference>
<dbReference type="InterPro" id="IPR005999">
    <property type="entry name" value="Glycerol_kin"/>
</dbReference>
<dbReference type="NCBIfam" id="TIGR01311">
    <property type="entry name" value="glycerol_kin"/>
    <property type="match status" value="1"/>
</dbReference>
<dbReference type="NCBIfam" id="NF000756">
    <property type="entry name" value="PRK00047.1"/>
    <property type="match status" value="1"/>
</dbReference>
<dbReference type="PANTHER" id="PTHR10196:SF69">
    <property type="entry name" value="GLYCEROL KINASE"/>
    <property type="match status" value="1"/>
</dbReference>
<dbReference type="PANTHER" id="PTHR10196">
    <property type="entry name" value="SUGAR KINASE"/>
    <property type="match status" value="1"/>
</dbReference>
<dbReference type="Pfam" id="PF02782">
    <property type="entry name" value="FGGY_C"/>
    <property type="match status" value="1"/>
</dbReference>
<dbReference type="Pfam" id="PF00370">
    <property type="entry name" value="FGGY_N"/>
    <property type="match status" value="1"/>
</dbReference>
<dbReference type="PIRSF" id="PIRSF000538">
    <property type="entry name" value="GlpK"/>
    <property type="match status" value="1"/>
</dbReference>
<dbReference type="SUPFAM" id="SSF53067">
    <property type="entry name" value="Actin-like ATPase domain"/>
    <property type="match status" value="2"/>
</dbReference>
<dbReference type="PROSITE" id="PS00445">
    <property type="entry name" value="FGGY_KINASES_2"/>
    <property type="match status" value="1"/>
</dbReference>
<organism>
    <name type="scientific">Staphylococcus aureus (strain USA300)</name>
    <dbReference type="NCBI Taxonomy" id="367830"/>
    <lineage>
        <taxon>Bacteria</taxon>
        <taxon>Bacillati</taxon>
        <taxon>Bacillota</taxon>
        <taxon>Bacilli</taxon>
        <taxon>Bacillales</taxon>
        <taxon>Staphylococcaceae</taxon>
        <taxon>Staphylococcus</taxon>
    </lineage>
</organism>
<reference key="1">
    <citation type="journal article" date="2006" name="Lancet">
        <title>Complete genome sequence of USA300, an epidemic clone of community-acquired meticillin-resistant Staphylococcus aureus.</title>
        <authorList>
            <person name="Diep B.A."/>
            <person name="Gill S.R."/>
            <person name="Chang R.F."/>
            <person name="Phan T.H."/>
            <person name="Chen J.H."/>
            <person name="Davidson M.G."/>
            <person name="Lin F."/>
            <person name="Lin J."/>
            <person name="Carleton H.A."/>
            <person name="Mongodin E.F."/>
            <person name="Sensabaugh G.F."/>
            <person name="Perdreau-Remington F."/>
        </authorList>
    </citation>
    <scope>NUCLEOTIDE SEQUENCE [LARGE SCALE GENOMIC DNA]</scope>
    <source>
        <strain>USA300</strain>
    </source>
</reference>
<gene>
    <name evidence="1" type="primary">glpK</name>
    <name type="ordered locus">SAUSA300_1192</name>
</gene>
<sequence>MEKYILSIDQGTTSSRAILFNQKGEIAGVAQREFKQYFPQSGWVEHDANEIWTSVLAVMTEVINENDVRADQIAGIGITNQRETTVVWDKHTGRPIYHAIVWQSRQTQSICSELKQQGYEQTFRDKTGLLLDPYFAGTKVKWILDNVEGAREKAENGDLLFGTIDTWLVWKLSGKAAHITDYSNASRTLMFNIHDLEWDDELLELLTVPKNMLPEVKASSEVYGKTIDYHFYGQEVPIAGVAGDQQAALFGQACFERGDVKNTYGTGGFMLMNTGDKAVKSESGLLTTIAYGIDGKVNYALEGSIFVSGSAIQWLRDGLRMINSAPQSESYATRVDSTEGVYVVPAFVGLGTPYWDSEARGAIFGLTRGTEKEHFIRATLESLCYQTRDVMEAMSKDSGIDVQSLRVDGGAVKNNFIMQFQADIVNTSVERPEIQETTALGAAFLAGLAVGFWESKDDIAKNWKLEEKFDPKMDEGEREKLYRGWKKAVEATQVFKTE</sequence>
<evidence type="ECO:0000255" key="1">
    <source>
        <dbReference type="HAMAP-Rule" id="MF_00186"/>
    </source>
</evidence>
<name>GLPK_STAA3</name>
<keyword id="KW-0067">ATP-binding</keyword>
<keyword id="KW-0319">Glycerol metabolism</keyword>
<keyword id="KW-0418">Kinase</keyword>
<keyword id="KW-0547">Nucleotide-binding</keyword>
<keyword id="KW-0597">Phosphoprotein</keyword>
<keyword id="KW-0808">Transferase</keyword>
<proteinExistence type="inferred from homology"/>
<protein>
    <recommendedName>
        <fullName evidence="1">Glycerol kinase</fullName>
        <ecNumber evidence="1">2.7.1.30</ecNumber>
    </recommendedName>
    <alternativeName>
        <fullName evidence="1">ATP:glycerol 3-phosphotransferase</fullName>
    </alternativeName>
    <alternativeName>
        <fullName evidence="1">Glycerokinase</fullName>
        <shortName evidence="1">GK</shortName>
    </alternativeName>
</protein>
<feature type="chain" id="PRO_1000020792" description="Glycerol kinase">
    <location>
        <begin position="1"/>
        <end position="498"/>
    </location>
</feature>
<feature type="binding site" evidence="1">
    <location>
        <position position="12"/>
    </location>
    <ligand>
        <name>ADP</name>
        <dbReference type="ChEBI" id="CHEBI:456216"/>
    </ligand>
</feature>
<feature type="binding site" evidence="1">
    <location>
        <position position="12"/>
    </location>
    <ligand>
        <name>ATP</name>
        <dbReference type="ChEBI" id="CHEBI:30616"/>
    </ligand>
</feature>
<feature type="binding site" evidence="1">
    <location>
        <position position="12"/>
    </location>
    <ligand>
        <name>sn-glycerol 3-phosphate</name>
        <dbReference type="ChEBI" id="CHEBI:57597"/>
    </ligand>
</feature>
<feature type="binding site" evidence="1">
    <location>
        <position position="13"/>
    </location>
    <ligand>
        <name>ATP</name>
        <dbReference type="ChEBI" id="CHEBI:30616"/>
    </ligand>
</feature>
<feature type="binding site" evidence="1">
    <location>
        <position position="14"/>
    </location>
    <ligand>
        <name>ATP</name>
        <dbReference type="ChEBI" id="CHEBI:30616"/>
    </ligand>
</feature>
<feature type="binding site" evidence="1">
    <location>
        <position position="16"/>
    </location>
    <ligand>
        <name>ADP</name>
        <dbReference type="ChEBI" id="CHEBI:456216"/>
    </ligand>
</feature>
<feature type="binding site" evidence="1">
    <location>
        <position position="82"/>
    </location>
    <ligand>
        <name>glycerol</name>
        <dbReference type="ChEBI" id="CHEBI:17754"/>
    </ligand>
</feature>
<feature type="binding site" evidence="1">
    <location>
        <position position="82"/>
    </location>
    <ligand>
        <name>sn-glycerol 3-phosphate</name>
        <dbReference type="ChEBI" id="CHEBI:57597"/>
    </ligand>
</feature>
<feature type="binding site" evidence="1">
    <location>
        <position position="83"/>
    </location>
    <ligand>
        <name>glycerol</name>
        <dbReference type="ChEBI" id="CHEBI:17754"/>
    </ligand>
</feature>
<feature type="binding site" evidence="1">
    <location>
        <position position="83"/>
    </location>
    <ligand>
        <name>sn-glycerol 3-phosphate</name>
        <dbReference type="ChEBI" id="CHEBI:57597"/>
    </ligand>
</feature>
<feature type="binding site" evidence="1">
    <location>
        <position position="134"/>
    </location>
    <ligand>
        <name>glycerol</name>
        <dbReference type="ChEBI" id="CHEBI:17754"/>
    </ligand>
</feature>
<feature type="binding site" evidence="1">
    <location>
        <position position="134"/>
    </location>
    <ligand>
        <name>sn-glycerol 3-phosphate</name>
        <dbReference type="ChEBI" id="CHEBI:57597"/>
    </ligand>
</feature>
<feature type="binding site" evidence="1">
    <location>
        <position position="244"/>
    </location>
    <ligand>
        <name>glycerol</name>
        <dbReference type="ChEBI" id="CHEBI:17754"/>
    </ligand>
</feature>
<feature type="binding site" evidence="1">
    <location>
        <position position="244"/>
    </location>
    <ligand>
        <name>sn-glycerol 3-phosphate</name>
        <dbReference type="ChEBI" id="CHEBI:57597"/>
    </ligand>
</feature>
<feature type="binding site" evidence="1">
    <location>
        <position position="245"/>
    </location>
    <ligand>
        <name>glycerol</name>
        <dbReference type="ChEBI" id="CHEBI:17754"/>
    </ligand>
</feature>
<feature type="binding site" evidence="1">
    <location>
        <position position="266"/>
    </location>
    <ligand>
        <name>ADP</name>
        <dbReference type="ChEBI" id="CHEBI:456216"/>
    </ligand>
</feature>
<feature type="binding site" evidence="1">
    <location>
        <position position="266"/>
    </location>
    <ligand>
        <name>ATP</name>
        <dbReference type="ChEBI" id="CHEBI:30616"/>
    </ligand>
</feature>
<feature type="binding site" evidence="1">
    <location>
        <position position="309"/>
    </location>
    <ligand>
        <name>ADP</name>
        <dbReference type="ChEBI" id="CHEBI:456216"/>
    </ligand>
</feature>
<feature type="binding site" evidence="1">
    <location>
        <position position="309"/>
    </location>
    <ligand>
        <name>ATP</name>
        <dbReference type="ChEBI" id="CHEBI:30616"/>
    </ligand>
</feature>
<feature type="binding site" evidence="1">
    <location>
        <position position="313"/>
    </location>
    <ligand>
        <name>ATP</name>
        <dbReference type="ChEBI" id="CHEBI:30616"/>
    </ligand>
</feature>
<feature type="binding site" evidence="1">
    <location>
        <position position="410"/>
    </location>
    <ligand>
        <name>ADP</name>
        <dbReference type="ChEBI" id="CHEBI:456216"/>
    </ligand>
</feature>
<feature type="binding site" evidence="1">
    <location>
        <position position="410"/>
    </location>
    <ligand>
        <name>ATP</name>
        <dbReference type="ChEBI" id="CHEBI:30616"/>
    </ligand>
</feature>
<feature type="binding site" evidence="1">
    <location>
        <position position="414"/>
    </location>
    <ligand>
        <name>ADP</name>
        <dbReference type="ChEBI" id="CHEBI:456216"/>
    </ligand>
</feature>
<feature type="modified residue" description="Phosphohistidine; by HPr" evidence="1">
    <location>
        <position position="230"/>
    </location>
</feature>